<accession>Q70EW5</accession>
<sequence>MSKVLLHGTLHVTVYEVDKLREGGGPNVFGKLMANIQETVGFGEGTPKIYATIDLEKSRVGRTRMIENEPQNPRWYESFHIYCAHHASNIIFTVKDDNPIGATLLGRAYMPVRELLDGDEVDKWIEIMDEDNNPTPAGSKIHVKLQYFDVTQDRNWDRGIKTGKYPGVPYTFFAQRQGCRVSLYQDAHVPDNFIPKISLAGGKYYEPHRCWEDIFDAISDAKHFIYITGWSVYTQIPLIRDPNRQKPGGDVLLGQLLKKKADEGVRVAMLVWDDRTSVNVFKEDGLMATHDEETENFFKDTDVHCILCPRDPDDGGSIIQDLKVSTMFTHHQKIVVVDHELPRGGSQKRRVMSFVGGIDLCDGRYDSAFHPLFSTLDSAHHDDFHQPNYAGASIAKGGPREPWHDIHSRVEGPIAWDVLFNFEQRWRKQGGKNVLVDLKQLDDILIPPSPVTFPNDQETWNVQLFRSIDGGAAFGFPDTPEEASKSGLVSGKDNIIDRSIQDAYINAIRRAKHFIYIENQYFLGSSFAWKSDDIDVDEVGALHLIPKELSLKIVTKIQEGEKFIVYIVVPMWPEGIPENGSVQAILDWQRRTMEMMYKDIVDALQDKGLDDDPREYLTFFCLGNREAKKSGEYEPTEAPEPDSGYLHAQENRRFMIYVHSKMMIVDDEYIIVGSANINQRSMDGARDSEIAMGAYQPYHLATQTPARGHVHGFRMALWYEHLGMLDDSFERPENKDCVNKANEMADKCWDLYASEDLDRDLPGHLLRYPVGVTRKGDITELPGTECFPDTSARILGAKSDYLPPILTT</sequence>
<organism>
    <name type="scientific">Cynara cardunculus</name>
    <name type="common">Cardoon</name>
    <dbReference type="NCBI Taxonomy" id="4265"/>
    <lineage>
        <taxon>Eukaryota</taxon>
        <taxon>Viridiplantae</taxon>
        <taxon>Streptophyta</taxon>
        <taxon>Embryophyta</taxon>
        <taxon>Tracheophyta</taxon>
        <taxon>Spermatophyta</taxon>
        <taxon>Magnoliopsida</taxon>
        <taxon>eudicotyledons</taxon>
        <taxon>Gunneridae</taxon>
        <taxon>Pentapetalae</taxon>
        <taxon>asterids</taxon>
        <taxon>campanulids</taxon>
        <taxon>Asterales</taxon>
        <taxon>Asteraceae</taxon>
        <taxon>Carduoideae</taxon>
        <taxon>Cardueae</taxon>
        <taxon>Carduinae</taxon>
        <taxon>Cynara</taxon>
    </lineage>
</organism>
<dbReference type="EC" id="3.1.4.4"/>
<dbReference type="EMBL" id="AJ583515">
    <property type="protein sequence ID" value="CAE47482.2"/>
    <property type="status" value="ALT_INIT"/>
    <property type="molecule type" value="mRNA"/>
</dbReference>
<dbReference type="SMR" id="Q70EW5"/>
<dbReference type="GO" id="GO:0005886">
    <property type="term" value="C:plasma membrane"/>
    <property type="evidence" value="ECO:0007669"/>
    <property type="project" value="TreeGrafter"/>
</dbReference>
<dbReference type="GO" id="GO:0005509">
    <property type="term" value="F:calcium ion binding"/>
    <property type="evidence" value="ECO:0007669"/>
    <property type="project" value="InterPro"/>
</dbReference>
<dbReference type="GO" id="GO:0004630">
    <property type="term" value="F:phospholipase D activity"/>
    <property type="evidence" value="ECO:0007669"/>
    <property type="project" value="UniProtKB-EC"/>
</dbReference>
<dbReference type="GO" id="GO:0046470">
    <property type="term" value="P:phosphatidylcholine metabolic process"/>
    <property type="evidence" value="ECO:0007669"/>
    <property type="project" value="InterPro"/>
</dbReference>
<dbReference type="GO" id="GO:0009395">
    <property type="term" value="P:phospholipid catabolic process"/>
    <property type="evidence" value="ECO:0007669"/>
    <property type="project" value="TreeGrafter"/>
</dbReference>
<dbReference type="CDD" id="cd04015">
    <property type="entry name" value="C2_plant_PLD"/>
    <property type="match status" value="1"/>
</dbReference>
<dbReference type="FunFam" id="3.30.870.10:FF:000027">
    <property type="entry name" value="Phospholipase D"/>
    <property type="match status" value="1"/>
</dbReference>
<dbReference type="FunFam" id="3.30.870.10:FF:000025">
    <property type="entry name" value="Phospholipase D delta"/>
    <property type="match status" value="1"/>
</dbReference>
<dbReference type="Gene3D" id="2.60.40.150">
    <property type="entry name" value="C2 domain"/>
    <property type="match status" value="1"/>
</dbReference>
<dbReference type="Gene3D" id="3.30.870.10">
    <property type="entry name" value="Endonuclease Chain A"/>
    <property type="match status" value="2"/>
</dbReference>
<dbReference type="InterPro" id="IPR000008">
    <property type="entry name" value="C2_dom"/>
</dbReference>
<dbReference type="InterPro" id="IPR035892">
    <property type="entry name" value="C2_domain_sf"/>
</dbReference>
<dbReference type="InterPro" id="IPR001736">
    <property type="entry name" value="PLipase_D/transphosphatidylase"/>
</dbReference>
<dbReference type="InterPro" id="IPR024632">
    <property type="entry name" value="PLipase_D_C"/>
</dbReference>
<dbReference type="InterPro" id="IPR015679">
    <property type="entry name" value="PLipase_D_fam"/>
</dbReference>
<dbReference type="InterPro" id="IPR011402">
    <property type="entry name" value="PLipase_D_pln"/>
</dbReference>
<dbReference type="PANTHER" id="PTHR18896">
    <property type="entry name" value="PHOSPHOLIPASE D"/>
    <property type="match status" value="1"/>
</dbReference>
<dbReference type="PANTHER" id="PTHR18896:SF162">
    <property type="entry name" value="PHOSPHOLIPASE D"/>
    <property type="match status" value="1"/>
</dbReference>
<dbReference type="Pfam" id="PF00168">
    <property type="entry name" value="C2"/>
    <property type="match status" value="1"/>
</dbReference>
<dbReference type="Pfam" id="PF12357">
    <property type="entry name" value="PLD_C"/>
    <property type="match status" value="1"/>
</dbReference>
<dbReference type="Pfam" id="PF00614">
    <property type="entry name" value="PLDc"/>
    <property type="match status" value="2"/>
</dbReference>
<dbReference type="PIRSF" id="PIRSF036470">
    <property type="entry name" value="PLD_plant"/>
    <property type="match status" value="1"/>
</dbReference>
<dbReference type="SMART" id="SM00239">
    <property type="entry name" value="C2"/>
    <property type="match status" value="1"/>
</dbReference>
<dbReference type="SMART" id="SM00155">
    <property type="entry name" value="PLDc"/>
    <property type="match status" value="2"/>
</dbReference>
<dbReference type="SUPFAM" id="SSF49562">
    <property type="entry name" value="C2 domain (Calcium/lipid-binding domain, CaLB)"/>
    <property type="match status" value="1"/>
</dbReference>
<dbReference type="SUPFAM" id="SSF56024">
    <property type="entry name" value="Phospholipase D/nuclease"/>
    <property type="match status" value="2"/>
</dbReference>
<dbReference type="PROSITE" id="PS50004">
    <property type="entry name" value="C2"/>
    <property type="match status" value="1"/>
</dbReference>
<dbReference type="PROSITE" id="PS50035">
    <property type="entry name" value="PLD"/>
    <property type="match status" value="2"/>
</dbReference>
<proteinExistence type="evidence at protein level"/>
<evidence type="ECO:0000250" key="1">
    <source>
        <dbReference type="UniProtKB" id="Q38882"/>
    </source>
</evidence>
<evidence type="ECO:0000250" key="2">
    <source>
        <dbReference type="UniProtKB" id="Q43007"/>
    </source>
</evidence>
<evidence type="ECO:0000255" key="3"/>
<evidence type="ECO:0000255" key="4">
    <source>
        <dbReference type="PROSITE-ProRule" id="PRU00041"/>
    </source>
</evidence>
<evidence type="ECO:0000255" key="5">
    <source>
        <dbReference type="PROSITE-ProRule" id="PRU00153"/>
    </source>
</evidence>
<evidence type="ECO:0000269" key="6">
    <source>
    </source>
</evidence>
<evidence type="ECO:0000305" key="7"/>
<evidence type="ECO:0000312" key="8">
    <source>
        <dbReference type="EMBL" id="CAE47482.2"/>
    </source>
</evidence>
<protein>
    <recommendedName>
        <fullName evidence="2 8">Phospholipase D alpha 1</fullName>
        <shortName evidence="2">PLD 1</shortName>
        <ecNumber>3.1.4.4</ecNumber>
    </recommendedName>
    <alternativeName>
        <fullName evidence="2">Choline phosphatase 1</fullName>
    </alternativeName>
    <alternativeName>
        <fullName evidence="2">Phosphatidylcholine-hydrolyzing phospholipase D 1</fullName>
    </alternativeName>
</protein>
<reference evidence="7 8" key="1">
    <citation type="journal article" date="2005" name="FEBS J.">
        <title>Molecular analysis of the interaction between cardosin A and phospholipase D(alpha). Identification of RGD/KGE sequences as binding motifs for C2 domains.</title>
        <authorList>
            <person name="Simoes I."/>
            <person name="Mueller E.C."/>
            <person name="Otto A."/>
            <person name="Bur D."/>
            <person name="Cheung A.Y."/>
            <person name="Faro C."/>
            <person name="Pires E."/>
        </authorList>
    </citation>
    <scope>NUCLEOTIDE SEQUENCE [MRNA]</scope>
    <scope>INTERACTION WITH CARDA</scope>
</reference>
<comment type="function">
    <text evidence="7">Hydrolyzes glycerol-phospholipids at the terminal phosphodiesteric bond. Plays an important role in various cellular processes.</text>
</comment>
<comment type="catalytic activity">
    <reaction evidence="2">
        <text>a 1,2-diacyl-sn-glycero-3-phosphocholine + H2O = a 1,2-diacyl-sn-glycero-3-phosphate + choline + H(+)</text>
        <dbReference type="Rhea" id="RHEA:14445"/>
        <dbReference type="ChEBI" id="CHEBI:15354"/>
        <dbReference type="ChEBI" id="CHEBI:15377"/>
        <dbReference type="ChEBI" id="CHEBI:15378"/>
        <dbReference type="ChEBI" id="CHEBI:57643"/>
        <dbReference type="ChEBI" id="CHEBI:58608"/>
        <dbReference type="EC" id="3.1.4.4"/>
    </reaction>
</comment>
<comment type="cofactor">
    <cofactor evidence="2">
        <name>Ca(2+)</name>
        <dbReference type="ChEBI" id="CHEBI:29108"/>
    </cofactor>
</comment>
<comment type="subunit">
    <text evidence="6">Interacts (via C2 domain) with CARDA (via RGD or KGE motifs).</text>
</comment>
<comment type="domain">
    <text evidence="7">C2 domain is a calcium-binding fold, and the binding promotes the protein association with membranes. A lower affinity toward calcium can be anticipated for PLD alpha due to the absence of two potential calcium ligands.</text>
</comment>
<comment type="similarity">
    <text evidence="3">Belongs to the phospholipase D family. C2-PLD subfamily.</text>
</comment>
<comment type="sequence caution" evidence="7">
    <conflict type="erroneous initiation">
        <sequence resource="EMBL-CDS" id="CAE47482"/>
    </conflict>
    <text>Truncated N-terminus.</text>
</comment>
<feature type="chain" id="PRO_0000394449" description="Phospholipase D alpha 1">
    <location>
        <begin position="1"/>
        <end position="808"/>
    </location>
</feature>
<feature type="domain" description="C2" evidence="4">
    <location>
        <begin position="1"/>
        <end position="125"/>
    </location>
</feature>
<feature type="domain" description="PLD phosphodiesterase 1" evidence="5">
    <location>
        <begin position="326"/>
        <end position="364"/>
    </location>
</feature>
<feature type="domain" description="PLD phosphodiesterase 2" evidence="5">
    <location>
        <begin position="654"/>
        <end position="681"/>
    </location>
</feature>
<feature type="active site" evidence="5">
    <location>
        <position position="331"/>
    </location>
</feature>
<feature type="active site" evidence="5">
    <location>
        <position position="333"/>
    </location>
</feature>
<feature type="active site" evidence="5">
    <location>
        <position position="338"/>
    </location>
</feature>
<feature type="active site" evidence="5">
    <location>
        <position position="659"/>
    </location>
</feature>
<feature type="active site" evidence="5">
    <location>
        <position position="661"/>
    </location>
</feature>
<feature type="active site" evidence="5">
    <location>
        <position position="666"/>
    </location>
</feature>
<feature type="binding site" evidence="1">
    <location>
        <position position="186"/>
    </location>
    <ligand>
        <name>Ca(2+)</name>
        <dbReference type="ChEBI" id="CHEBI:29108"/>
    </ligand>
</feature>
<feature type="binding site" evidence="1">
    <location>
        <position position="331"/>
    </location>
    <ligand>
        <name>a 1,2-diacyl-sn-glycero-3-phosphate</name>
        <dbReference type="ChEBI" id="CHEBI:58608"/>
    </ligand>
</feature>
<feature type="binding site" evidence="1">
    <location>
        <position position="370"/>
    </location>
    <ligand>
        <name>Ca(2+)</name>
        <dbReference type="ChEBI" id="CHEBI:29108"/>
    </ligand>
</feature>
<feature type="binding site" evidence="1">
    <location>
        <position position="404"/>
    </location>
    <ligand>
        <name>Ca(2+)</name>
        <dbReference type="ChEBI" id="CHEBI:29108"/>
    </ligand>
</feature>
<feature type="binding site" evidence="1">
    <location>
        <position position="520"/>
    </location>
    <ligand>
        <name>a 1,2-diacyl-sn-glycero-3-phosphate</name>
        <dbReference type="ChEBI" id="CHEBI:58608"/>
    </ligand>
</feature>
<feature type="binding site" evidence="1">
    <location>
        <position position="659"/>
    </location>
    <ligand>
        <name>a 1,2-diacyl-sn-glycero-3-phosphate</name>
        <dbReference type="ChEBI" id="CHEBI:58608"/>
    </ligand>
</feature>
<feature type="binding site" evidence="1">
    <location>
        <position position="720"/>
    </location>
    <ligand>
        <name>Ca(2+)</name>
        <dbReference type="ChEBI" id="CHEBI:29108"/>
    </ligand>
</feature>
<keyword id="KW-0106">Calcium</keyword>
<keyword id="KW-0378">Hydrolase</keyword>
<keyword id="KW-0442">Lipid degradation</keyword>
<keyword id="KW-0443">Lipid metabolism</keyword>
<keyword id="KW-0479">Metal-binding</keyword>
<keyword id="KW-0677">Repeat</keyword>
<gene>
    <name evidence="2" type="primary">PLD1</name>
    <name type="synonym">PLDALPHA</name>
</gene>
<name>PLDA1_CYNCA</name>